<organism>
    <name type="scientific">Mesorhizobium japonicum (strain LMG 29417 / CECT 9101 / MAFF 303099)</name>
    <name type="common">Mesorhizobium loti (strain MAFF 303099)</name>
    <dbReference type="NCBI Taxonomy" id="266835"/>
    <lineage>
        <taxon>Bacteria</taxon>
        <taxon>Pseudomonadati</taxon>
        <taxon>Pseudomonadota</taxon>
        <taxon>Alphaproteobacteria</taxon>
        <taxon>Hyphomicrobiales</taxon>
        <taxon>Phyllobacteriaceae</taxon>
        <taxon>Mesorhizobium</taxon>
    </lineage>
</organism>
<accession>Q98N65</accession>
<gene>
    <name evidence="1" type="primary">rpoC</name>
    <name type="ordered locus">mlr0277</name>
</gene>
<keyword id="KW-0240">DNA-directed RNA polymerase</keyword>
<keyword id="KW-0460">Magnesium</keyword>
<keyword id="KW-0479">Metal-binding</keyword>
<keyword id="KW-0548">Nucleotidyltransferase</keyword>
<keyword id="KW-0804">Transcription</keyword>
<keyword id="KW-0808">Transferase</keyword>
<keyword id="KW-0862">Zinc</keyword>
<sequence length="1398" mass="155101">MNQEVMNLFNPQAPAQVFDSIRISLASPEKILSWSFGEIKKPETINYRTFKPERDGLFCARIFGPIKDYECLCGKYKRMKYKGVICEKCGVEVTLSRVRRERMGHIELAAPVAHIWFLKSLPSRIGTLLDMTLKDIERVLYFENYIVTEPGLTALKEHQLLSEEEYMIAVDEYGEDSFTAMIGAEAIHDLLAGMDLEKIAGDLRSELASTTSELKQKKYLKRLKVVENFMESGNRPEWMIMKVVPVIPPDLRPLVPLDGGRFATSDLNDLYRRVINRNNRLKRLIELRAPGIIVRNEKRMLQEAVDALFDNGRRGRVITGANKRPLKSLSDMLKGKQGRFRQNLLGKRVDYSGRSVIVTGPELKLHQCGLPKKMALELFKPFIYARLDAKGYSSTVKQAKKLVEKERPEVWDILDEVIREHPVLLNRAPTLHRLGIQAFEPILIEGKAIQLHPLVCTAFNADFDGDQMAVHVPLSLEAQLEARVLMMSTNNILHPASGAPIIVPSQDMVLGLYYLSIVNQNEPGEGMVFADMGELQHALETKAVTLHAKIKGRFRTVDAEGKVVSKIHDTTPGRMIIGELLPKNVNVPYETANQEMTKKNISKMIDTVYRHCGQKETVIFCDRIMALGFAHACRAGISFGKDDMLIPDSKIKLVSDTEALAKEYEQQYNDGLITQGEKYNKVVDAWAKCSEKVADEMMARIKAVEFEDNGRQKPMNSIYMMSHSGARGSPTQMRQLAGMRGLMAKPSGEIIETPIISNFKEGLTVLEYFNSTHGARKGLADTALKTANSGYLTRRLVDVAQDCIVNSVDCGTDKGLTMQPIVDAGQVVASVGQRVLGRTALDDINHPVTGDLLVKAGTLMDERDVEQIEKAGVQSVRIRSALTCEVRVGVCAVCYGRDLARGTPVNQGEAVGVIAAQSIGEPGTQLTMRTFHMGGTAQVVDSSFLEASYEGKVEIRNRNVVRNSDGQQMVMGRNMAVLILDEAGKERATHRVTYGSRIFVDDGDKVKRGQRIAEWDPYTRPILTEIEGRVAFEDLVDGISVQETADESTGITKREVIDWRSTPRGNDLKPAIVVQDAKGKVGKLSKGGDARFLLSVEAILSVEPGAQVRPGDVLARIPMESAKTKDITGGLPRVAELFEARRPKDHAIIAEIDGTIRFGRDYKNKRRIIIEPHDSTLEPVEYLIPKGKPFHLQDGDVIEKGDYILDGNPAPHDILAIKGVEALASYLVNEIQEVYRLQGVSINDKHIEVIVRQMLQKVEITTQGDSTYIPGDHVDVIELEEVNERLIEDGKKPAEGQPVLLGITKASLQTPSFISAASFQETTRVLTEAAVAGKTDMLQGLKENVIVGRLIPAGTGGTMSQIRRIATSRDELIIDERRKASGVEVAEPMLADMTTAAQ</sequence>
<name>RPOC_RHILO</name>
<proteinExistence type="inferred from homology"/>
<feature type="chain" id="PRO_0000067782" description="DNA-directed RNA polymerase subunit beta'">
    <location>
        <begin position="1"/>
        <end position="1398"/>
    </location>
</feature>
<feature type="binding site" evidence="1">
    <location>
        <position position="71"/>
    </location>
    <ligand>
        <name>Zn(2+)</name>
        <dbReference type="ChEBI" id="CHEBI:29105"/>
        <label>1</label>
    </ligand>
</feature>
<feature type="binding site" evidence="1">
    <location>
        <position position="73"/>
    </location>
    <ligand>
        <name>Zn(2+)</name>
        <dbReference type="ChEBI" id="CHEBI:29105"/>
        <label>1</label>
    </ligand>
</feature>
<feature type="binding site" evidence="1">
    <location>
        <position position="86"/>
    </location>
    <ligand>
        <name>Zn(2+)</name>
        <dbReference type="ChEBI" id="CHEBI:29105"/>
        <label>1</label>
    </ligand>
</feature>
<feature type="binding site" evidence="1">
    <location>
        <position position="89"/>
    </location>
    <ligand>
        <name>Zn(2+)</name>
        <dbReference type="ChEBI" id="CHEBI:29105"/>
        <label>1</label>
    </ligand>
</feature>
<feature type="binding site" evidence="1">
    <location>
        <position position="462"/>
    </location>
    <ligand>
        <name>Mg(2+)</name>
        <dbReference type="ChEBI" id="CHEBI:18420"/>
    </ligand>
</feature>
<feature type="binding site" evidence="1">
    <location>
        <position position="464"/>
    </location>
    <ligand>
        <name>Mg(2+)</name>
        <dbReference type="ChEBI" id="CHEBI:18420"/>
    </ligand>
</feature>
<feature type="binding site" evidence="1">
    <location>
        <position position="466"/>
    </location>
    <ligand>
        <name>Mg(2+)</name>
        <dbReference type="ChEBI" id="CHEBI:18420"/>
    </ligand>
</feature>
<feature type="binding site" evidence="1">
    <location>
        <position position="810"/>
    </location>
    <ligand>
        <name>Zn(2+)</name>
        <dbReference type="ChEBI" id="CHEBI:29105"/>
        <label>2</label>
    </ligand>
</feature>
<feature type="binding site" evidence="1">
    <location>
        <position position="884"/>
    </location>
    <ligand>
        <name>Zn(2+)</name>
        <dbReference type="ChEBI" id="CHEBI:29105"/>
        <label>2</label>
    </ligand>
</feature>
<feature type="binding site" evidence="1">
    <location>
        <position position="891"/>
    </location>
    <ligand>
        <name>Zn(2+)</name>
        <dbReference type="ChEBI" id="CHEBI:29105"/>
        <label>2</label>
    </ligand>
</feature>
<feature type="binding site" evidence="1">
    <location>
        <position position="894"/>
    </location>
    <ligand>
        <name>Zn(2+)</name>
        <dbReference type="ChEBI" id="CHEBI:29105"/>
        <label>2</label>
    </ligand>
</feature>
<dbReference type="EC" id="2.7.7.6" evidence="1"/>
<dbReference type="EMBL" id="BA000012">
    <property type="protein sequence ID" value="BAB47897.1"/>
    <property type="molecule type" value="Genomic_DNA"/>
</dbReference>
<dbReference type="RefSeq" id="WP_010909267.1">
    <property type="nucleotide sequence ID" value="NC_002678.2"/>
</dbReference>
<dbReference type="SMR" id="Q98N65"/>
<dbReference type="GeneID" id="66684226"/>
<dbReference type="KEGG" id="mlo:mlr0277"/>
<dbReference type="eggNOG" id="COG0086">
    <property type="taxonomic scope" value="Bacteria"/>
</dbReference>
<dbReference type="HOGENOM" id="CLU_000524_3_1_5"/>
<dbReference type="Proteomes" id="UP000000552">
    <property type="component" value="Chromosome"/>
</dbReference>
<dbReference type="GO" id="GO:0000428">
    <property type="term" value="C:DNA-directed RNA polymerase complex"/>
    <property type="evidence" value="ECO:0007669"/>
    <property type="project" value="UniProtKB-KW"/>
</dbReference>
<dbReference type="GO" id="GO:0003677">
    <property type="term" value="F:DNA binding"/>
    <property type="evidence" value="ECO:0007669"/>
    <property type="project" value="UniProtKB-UniRule"/>
</dbReference>
<dbReference type="GO" id="GO:0003899">
    <property type="term" value="F:DNA-directed RNA polymerase activity"/>
    <property type="evidence" value="ECO:0007669"/>
    <property type="project" value="UniProtKB-UniRule"/>
</dbReference>
<dbReference type="GO" id="GO:0000287">
    <property type="term" value="F:magnesium ion binding"/>
    <property type="evidence" value="ECO:0007669"/>
    <property type="project" value="UniProtKB-UniRule"/>
</dbReference>
<dbReference type="GO" id="GO:0008270">
    <property type="term" value="F:zinc ion binding"/>
    <property type="evidence" value="ECO:0007669"/>
    <property type="project" value="UniProtKB-UniRule"/>
</dbReference>
<dbReference type="GO" id="GO:0006351">
    <property type="term" value="P:DNA-templated transcription"/>
    <property type="evidence" value="ECO:0007669"/>
    <property type="project" value="UniProtKB-UniRule"/>
</dbReference>
<dbReference type="CDD" id="cd02655">
    <property type="entry name" value="RNAP_beta'_C"/>
    <property type="match status" value="1"/>
</dbReference>
<dbReference type="CDD" id="cd01609">
    <property type="entry name" value="RNAP_beta'_N"/>
    <property type="match status" value="1"/>
</dbReference>
<dbReference type="FunFam" id="4.10.860.120:FF:000001">
    <property type="entry name" value="DNA-directed RNA polymerase subunit beta"/>
    <property type="match status" value="1"/>
</dbReference>
<dbReference type="Gene3D" id="1.10.132.30">
    <property type="match status" value="1"/>
</dbReference>
<dbReference type="Gene3D" id="1.10.150.390">
    <property type="match status" value="1"/>
</dbReference>
<dbReference type="Gene3D" id="1.10.1790.20">
    <property type="match status" value="1"/>
</dbReference>
<dbReference type="Gene3D" id="1.10.40.90">
    <property type="match status" value="1"/>
</dbReference>
<dbReference type="Gene3D" id="2.40.40.20">
    <property type="match status" value="1"/>
</dbReference>
<dbReference type="Gene3D" id="2.40.50.100">
    <property type="match status" value="3"/>
</dbReference>
<dbReference type="Gene3D" id="4.10.860.120">
    <property type="entry name" value="RNA polymerase II, clamp domain"/>
    <property type="match status" value="1"/>
</dbReference>
<dbReference type="Gene3D" id="1.10.274.100">
    <property type="entry name" value="RNA polymerase Rpb1, domain 3"/>
    <property type="match status" value="2"/>
</dbReference>
<dbReference type="HAMAP" id="MF_01322">
    <property type="entry name" value="RNApol_bact_RpoC"/>
    <property type="match status" value="1"/>
</dbReference>
<dbReference type="InterPro" id="IPR045867">
    <property type="entry name" value="DNA-dir_RpoC_beta_prime"/>
</dbReference>
<dbReference type="InterPro" id="IPR012754">
    <property type="entry name" value="DNA-dir_RpoC_beta_prime_bact"/>
</dbReference>
<dbReference type="InterPro" id="IPR000722">
    <property type="entry name" value="RNA_pol_asu"/>
</dbReference>
<dbReference type="InterPro" id="IPR006592">
    <property type="entry name" value="RNA_pol_N"/>
</dbReference>
<dbReference type="InterPro" id="IPR007080">
    <property type="entry name" value="RNA_pol_Rpb1_1"/>
</dbReference>
<dbReference type="InterPro" id="IPR007066">
    <property type="entry name" value="RNA_pol_Rpb1_3"/>
</dbReference>
<dbReference type="InterPro" id="IPR042102">
    <property type="entry name" value="RNA_pol_Rpb1_3_sf"/>
</dbReference>
<dbReference type="InterPro" id="IPR007083">
    <property type="entry name" value="RNA_pol_Rpb1_4"/>
</dbReference>
<dbReference type="InterPro" id="IPR007081">
    <property type="entry name" value="RNA_pol_Rpb1_5"/>
</dbReference>
<dbReference type="InterPro" id="IPR044893">
    <property type="entry name" value="RNA_pol_Rpb1_clamp_domain"/>
</dbReference>
<dbReference type="InterPro" id="IPR038120">
    <property type="entry name" value="Rpb1_funnel_sf"/>
</dbReference>
<dbReference type="NCBIfam" id="TIGR02386">
    <property type="entry name" value="rpoC_TIGR"/>
    <property type="match status" value="1"/>
</dbReference>
<dbReference type="PANTHER" id="PTHR19376">
    <property type="entry name" value="DNA-DIRECTED RNA POLYMERASE"/>
    <property type="match status" value="1"/>
</dbReference>
<dbReference type="PANTHER" id="PTHR19376:SF54">
    <property type="entry name" value="DNA-DIRECTED RNA POLYMERASE SUBUNIT BETA"/>
    <property type="match status" value="1"/>
</dbReference>
<dbReference type="Pfam" id="PF04997">
    <property type="entry name" value="RNA_pol_Rpb1_1"/>
    <property type="match status" value="1"/>
</dbReference>
<dbReference type="Pfam" id="PF00623">
    <property type="entry name" value="RNA_pol_Rpb1_2"/>
    <property type="match status" value="1"/>
</dbReference>
<dbReference type="Pfam" id="PF04983">
    <property type="entry name" value="RNA_pol_Rpb1_3"/>
    <property type="match status" value="1"/>
</dbReference>
<dbReference type="Pfam" id="PF05000">
    <property type="entry name" value="RNA_pol_Rpb1_4"/>
    <property type="match status" value="1"/>
</dbReference>
<dbReference type="Pfam" id="PF04998">
    <property type="entry name" value="RNA_pol_Rpb1_5"/>
    <property type="match status" value="1"/>
</dbReference>
<dbReference type="SMART" id="SM00663">
    <property type="entry name" value="RPOLA_N"/>
    <property type="match status" value="1"/>
</dbReference>
<dbReference type="SUPFAM" id="SSF64484">
    <property type="entry name" value="beta and beta-prime subunits of DNA dependent RNA-polymerase"/>
    <property type="match status" value="1"/>
</dbReference>
<reference key="1">
    <citation type="journal article" date="2000" name="DNA Res.">
        <title>Complete genome structure of the nitrogen-fixing symbiotic bacterium Mesorhizobium loti.</title>
        <authorList>
            <person name="Kaneko T."/>
            <person name="Nakamura Y."/>
            <person name="Sato S."/>
            <person name="Asamizu E."/>
            <person name="Kato T."/>
            <person name="Sasamoto S."/>
            <person name="Watanabe A."/>
            <person name="Idesawa K."/>
            <person name="Ishikawa A."/>
            <person name="Kawashima K."/>
            <person name="Kimura T."/>
            <person name="Kishida Y."/>
            <person name="Kiyokawa C."/>
            <person name="Kohara M."/>
            <person name="Matsumoto M."/>
            <person name="Matsuno A."/>
            <person name="Mochizuki Y."/>
            <person name="Nakayama S."/>
            <person name="Nakazaki N."/>
            <person name="Shimpo S."/>
            <person name="Sugimoto M."/>
            <person name="Takeuchi C."/>
            <person name="Yamada M."/>
            <person name="Tabata S."/>
        </authorList>
    </citation>
    <scope>NUCLEOTIDE SEQUENCE [LARGE SCALE GENOMIC DNA]</scope>
    <source>
        <strain>LMG 29417 / CECT 9101 / MAFF 303099</strain>
    </source>
</reference>
<comment type="function">
    <text evidence="1">DNA-dependent RNA polymerase catalyzes the transcription of DNA into RNA using the four ribonucleoside triphosphates as substrates.</text>
</comment>
<comment type="catalytic activity">
    <reaction evidence="1">
        <text>RNA(n) + a ribonucleoside 5'-triphosphate = RNA(n+1) + diphosphate</text>
        <dbReference type="Rhea" id="RHEA:21248"/>
        <dbReference type="Rhea" id="RHEA-COMP:14527"/>
        <dbReference type="Rhea" id="RHEA-COMP:17342"/>
        <dbReference type="ChEBI" id="CHEBI:33019"/>
        <dbReference type="ChEBI" id="CHEBI:61557"/>
        <dbReference type="ChEBI" id="CHEBI:140395"/>
        <dbReference type="EC" id="2.7.7.6"/>
    </reaction>
</comment>
<comment type="cofactor">
    <cofactor evidence="1">
        <name>Mg(2+)</name>
        <dbReference type="ChEBI" id="CHEBI:18420"/>
    </cofactor>
    <text evidence="1">Binds 1 Mg(2+) ion per subunit.</text>
</comment>
<comment type="cofactor">
    <cofactor evidence="1">
        <name>Zn(2+)</name>
        <dbReference type="ChEBI" id="CHEBI:29105"/>
    </cofactor>
    <text evidence="1">Binds 2 Zn(2+) ions per subunit.</text>
</comment>
<comment type="subunit">
    <text evidence="1">The RNAP catalytic core consists of 2 alpha, 1 beta, 1 beta' and 1 omega subunit. When a sigma factor is associated with the core the holoenzyme is formed, which can initiate transcription.</text>
</comment>
<comment type="similarity">
    <text evidence="1">Belongs to the RNA polymerase beta' chain family.</text>
</comment>
<protein>
    <recommendedName>
        <fullName evidence="1">DNA-directed RNA polymerase subunit beta'</fullName>
        <shortName evidence="1">RNAP subunit beta'</shortName>
        <ecNumber evidence="1">2.7.7.6</ecNumber>
    </recommendedName>
    <alternativeName>
        <fullName evidence="1">RNA polymerase subunit beta'</fullName>
    </alternativeName>
    <alternativeName>
        <fullName evidence="1">Transcriptase subunit beta'</fullName>
    </alternativeName>
</protein>
<evidence type="ECO:0000255" key="1">
    <source>
        <dbReference type="HAMAP-Rule" id="MF_01322"/>
    </source>
</evidence>